<accession>Q99P55</accession>
<evidence type="ECO:0000250" key="1">
    <source>
        <dbReference type="UniProtKB" id="P0A924"/>
    </source>
</evidence>
<evidence type="ECO:0000250" key="2">
    <source>
        <dbReference type="UniProtKB" id="Q9BX95"/>
    </source>
</evidence>
<evidence type="ECO:0000250" key="3">
    <source>
        <dbReference type="UniProtKB" id="Q9JI99"/>
    </source>
</evidence>
<evidence type="ECO:0000255" key="4"/>
<evidence type="ECO:0000256" key="5">
    <source>
        <dbReference type="SAM" id="MobiDB-lite"/>
    </source>
</evidence>
<evidence type="ECO:0000305" key="6"/>
<evidence type="ECO:0000312" key="7">
    <source>
        <dbReference type="RGD" id="727829"/>
    </source>
</evidence>
<evidence type="ECO:0007744" key="8">
    <source>
    </source>
</evidence>
<name>SGPP1_RAT</name>
<protein>
    <recommendedName>
        <fullName evidence="6">Sphingosine-1-phosphate phosphatase 1</fullName>
        <shortName>SPPase1</shortName>
        <shortName>Spp1</shortName>
        <ecNumber evidence="2">3.1.3.-</ecNumber>
    </recommendedName>
    <alternativeName>
        <fullName>Sphingosine-1-phosphatase 1</fullName>
    </alternativeName>
</protein>
<keyword id="KW-1003">Cell membrane</keyword>
<keyword id="KW-0256">Endoplasmic reticulum</keyword>
<keyword id="KW-0378">Hydrolase</keyword>
<keyword id="KW-0443">Lipid metabolism</keyword>
<keyword id="KW-0472">Membrane</keyword>
<keyword id="KW-0597">Phosphoprotein</keyword>
<keyword id="KW-1185">Reference proteome</keyword>
<keyword id="KW-0812">Transmembrane</keyword>
<keyword id="KW-1133">Transmembrane helix</keyword>
<organism>
    <name type="scientific">Rattus norvegicus</name>
    <name type="common">Rat</name>
    <dbReference type="NCBI Taxonomy" id="10116"/>
    <lineage>
        <taxon>Eukaryota</taxon>
        <taxon>Metazoa</taxon>
        <taxon>Chordata</taxon>
        <taxon>Craniata</taxon>
        <taxon>Vertebrata</taxon>
        <taxon>Euteleostomi</taxon>
        <taxon>Mammalia</taxon>
        <taxon>Eutheria</taxon>
        <taxon>Euarchontoglires</taxon>
        <taxon>Glires</taxon>
        <taxon>Rodentia</taxon>
        <taxon>Myomorpha</taxon>
        <taxon>Muroidea</taxon>
        <taxon>Muridae</taxon>
        <taxon>Murinae</taxon>
        <taxon>Rattus</taxon>
    </lineage>
</organism>
<gene>
    <name evidence="7" type="primary">Sgpp1</name>
</gene>
<comment type="function">
    <text evidence="2 3">Specifically dephosphorylates sphingosine 1-phosphate (S1P), dihydro-S1P, and phyto-S1P. Does not act on ceramide 1-phosphate, lysophosphatidic acid or phosphatidic acid. Sphingosine-1-phosphate phosphatase activity is needed for efficient recycling of sphingosine into the sphingolipid synthesis pathway. Regulates the intracellular levels of the bioactive sphingolipid metabolite S1P that regulates diverse biological processes acting both as an extracellular receptor ligand or as an intracellular second messenger (By similarity). Involved in efficient ceramide synthesis from exogenous sphingoid bases. Converts S1P to sphingosine, which is readily metabolized to ceramide via ceramide synthase. In concert with sphingosine kinase 2 (SphK2), recycles sphingosine into ceramide through a phosphorylation/dephosphorylation cycle (By similarity). Regulates endoplasmic-to-Golgi trafficking of ceramides, resulting in the regulation of ceramide levels in the endoplasmic reticulum, preferentially long-chain ceramide species, and influences the anterograde membrane transport of both ceramide and proteins from the endoplasmic reticulum to the Golgi apparatus (By similarity). The modulation of intracellular ceramide levels in turn regulates apoptosis (By similarity). Via S1P levels, modulates resting tone, intracellular Ca(2+) and myogenic vasoconstriction in resistance arteries. Also involved in unfolded protein response (UPR) and ER stress-induced autophagy via regulation of intracellular S1P levels (By similarity). Involved in the regulation of epidermal homeostasis and keratinocyte differentiation (By similarity).</text>
</comment>
<comment type="catalytic activity">
    <reaction evidence="2">
        <text>sphinganine 1-phosphate + H2O = sphinganine + phosphate</text>
        <dbReference type="Rhea" id="RHEA:27514"/>
        <dbReference type="ChEBI" id="CHEBI:15377"/>
        <dbReference type="ChEBI" id="CHEBI:43474"/>
        <dbReference type="ChEBI" id="CHEBI:57817"/>
        <dbReference type="ChEBI" id="CHEBI:57939"/>
    </reaction>
    <physiologicalReaction direction="left-to-right" evidence="2">
        <dbReference type="Rhea" id="RHEA:27515"/>
    </physiologicalReaction>
</comment>
<comment type="catalytic activity">
    <reaction evidence="2">
        <text>sphing-4-enine 1-phosphate + H2O = sphing-4-enine + phosphate</text>
        <dbReference type="Rhea" id="RHEA:27518"/>
        <dbReference type="ChEBI" id="CHEBI:15377"/>
        <dbReference type="ChEBI" id="CHEBI:43474"/>
        <dbReference type="ChEBI" id="CHEBI:57756"/>
        <dbReference type="ChEBI" id="CHEBI:60119"/>
    </reaction>
    <physiologicalReaction direction="left-to-right" evidence="2">
        <dbReference type="Rhea" id="RHEA:27519"/>
    </physiologicalReaction>
</comment>
<comment type="subcellular location">
    <subcellularLocation>
        <location evidence="2">Endoplasmic reticulum membrane</location>
        <topology evidence="4">Multi-pass membrane protein</topology>
    </subcellularLocation>
    <subcellularLocation>
        <location evidence="3">Cell membrane</location>
        <topology evidence="4">Multi-pass membrane protein</topology>
    </subcellularLocation>
</comment>
<comment type="similarity">
    <text evidence="6">Belongs to the type 2 lipid phosphate phosphatase family.</text>
</comment>
<proteinExistence type="evidence at protein level"/>
<sequence>MSLGQRLALLAIRLQEPQRVASFQRLCGVEVPLGSPKAGEDAETEVRGAPGDPRRRPRQSGADGSPAKPDCCGAPNGVRNGLAAEPGPTGPRRAGSLRRNSLTGEEGELAKVSNLPLYYLFCFGTELGNELFYIIFFPFWIWNLDPFVGRRLVIIWVLVMYLGQCTKDIIRWPRPASPPVIKLEIFYNSEYSMPSTHAMSGTAIPIAMILLTYGRWQYPLIYGLILIPCWSSLVCLSRIYMGMHSILDVIAGFLYTILILIIFYPLVDLIDNFNQTYKYAPLIIIGLHLILGIFSFTLDTWSTSRGDTAEILGSGAGIACGSHAAYNLGISLDPSLHTLPLAIPPLTVTLFGKAILRVVIGMLLVLFVRDIMKKVTIPLACKLFGIPCHDLRQARQHMEVELPYRYITYGTVGFSITFLIPYIFSFIGIS</sequence>
<reference key="1">
    <citation type="journal article" date="2004" name="Nature">
        <title>Genome sequence of the Brown Norway rat yields insights into mammalian evolution.</title>
        <authorList>
            <person name="Gibbs R.A."/>
            <person name="Weinstock G.M."/>
            <person name="Metzker M.L."/>
            <person name="Muzny D.M."/>
            <person name="Sodergren E.J."/>
            <person name="Scherer S."/>
            <person name="Scott G."/>
            <person name="Steffen D."/>
            <person name="Worley K.C."/>
            <person name="Burch P.E."/>
            <person name="Okwuonu G."/>
            <person name="Hines S."/>
            <person name="Lewis L."/>
            <person name="Deramo C."/>
            <person name="Delgado O."/>
            <person name="Dugan-Rocha S."/>
            <person name="Miner G."/>
            <person name="Morgan M."/>
            <person name="Hawes A."/>
            <person name="Gill R."/>
            <person name="Holt R.A."/>
            <person name="Adams M.D."/>
            <person name="Amanatides P.G."/>
            <person name="Baden-Tillson H."/>
            <person name="Barnstead M."/>
            <person name="Chin S."/>
            <person name="Evans C.A."/>
            <person name="Ferriera S."/>
            <person name="Fosler C."/>
            <person name="Glodek A."/>
            <person name="Gu Z."/>
            <person name="Jennings D."/>
            <person name="Kraft C.L."/>
            <person name="Nguyen T."/>
            <person name="Pfannkoch C.M."/>
            <person name="Sitter C."/>
            <person name="Sutton G.G."/>
            <person name="Venter J.C."/>
            <person name="Woodage T."/>
            <person name="Smith D."/>
            <person name="Lee H.-M."/>
            <person name="Gustafson E."/>
            <person name="Cahill P."/>
            <person name="Kana A."/>
            <person name="Doucette-Stamm L."/>
            <person name="Weinstock K."/>
            <person name="Fechtel K."/>
            <person name="Weiss R.B."/>
            <person name="Dunn D.M."/>
            <person name="Green E.D."/>
            <person name="Blakesley R.W."/>
            <person name="Bouffard G.G."/>
            <person name="De Jong P.J."/>
            <person name="Osoegawa K."/>
            <person name="Zhu B."/>
            <person name="Marra M."/>
            <person name="Schein J."/>
            <person name="Bosdet I."/>
            <person name="Fjell C."/>
            <person name="Jones S."/>
            <person name="Krzywinski M."/>
            <person name="Mathewson C."/>
            <person name="Siddiqui A."/>
            <person name="Wye N."/>
            <person name="McPherson J."/>
            <person name="Zhao S."/>
            <person name="Fraser C.M."/>
            <person name="Shetty J."/>
            <person name="Shatsman S."/>
            <person name="Geer K."/>
            <person name="Chen Y."/>
            <person name="Abramzon S."/>
            <person name="Nierman W.C."/>
            <person name="Havlak P.H."/>
            <person name="Chen R."/>
            <person name="Durbin K.J."/>
            <person name="Egan A."/>
            <person name="Ren Y."/>
            <person name="Song X.-Z."/>
            <person name="Li B."/>
            <person name="Liu Y."/>
            <person name="Qin X."/>
            <person name="Cawley S."/>
            <person name="Cooney A.J."/>
            <person name="D'Souza L.M."/>
            <person name="Martin K."/>
            <person name="Wu J.Q."/>
            <person name="Gonzalez-Garay M.L."/>
            <person name="Jackson A.R."/>
            <person name="Kalafus K.J."/>
            <person name="McLeod M.P."/>
            <person name="Milosavljevic A."/>
            <person name="Virk D."/>
            <person name="Volkov A."/>
            <person name="Wheeler D.A."/>
            <person name="Zhang Z."/>
            <person name="Bailey J.A."/>
            <person name="Eichler E.E."/>
            <person name="Tuzun E."/>
            <person name="Birney E."/>
            <person name="Mongin E."/>
            <person name="Ureta-Vidal A."/>
            <person name="Woodwark C."/>
            <person name="Zdobnov E."/>
            <person name="Bork P."/>
            <person name="Suyama M."/>
            <person name="Torrents D."/>
            <person name="Alexandersson M."/>
            <person name="Trask B.J."/>
            <person name="Young J.M."/>
            <person name="Huang H."/>
            <person name="Wang H."/>
            <person name="Xing H."/>
            <person name="Daniels S."/>
            <person name="Gietzen D."/>
            <person name="Schmidt J."/>
            <person name="Stevens K."/>
            <person name="Vitt U."/>
            <person name="Wingrove J."/>
            <person name="Camara F."/>
            <person name="Mar Alba M."/>
            <person name="Abril J.F."/>
            <person name="Guigo R."/>
            <person name="Smit A."/>
            <person name="Dubchak I."/>
            <person name="Rubin E.M."/>
            <person name="Couronne O."/>
            <person name="Poliakov A."/>
            <person name="Huebner N."/>
            <person name="Ganten D."/>
            <person name="Goesele C."/>
            <person name="Hummel O."/>
            <person name="Kreitler T."/>
            <person name="Lee Y.-A."/>
            <person name="Monti J."/>
            <person name="Schulz H."/>
            <person name="Zimdahl H."/>
            <person name="Himmelbauer H."/>
            <person name="Lehrach H."/>
            <person name="Jacob H.J."/>
            <person name="Bromberg S."/>
            <person name="Gullings-Handley J."/>
            <person name="Jensen-Seaman M.I."/>
            <person name="Kwitek A.E."/>
            <person name="Lazar J."/>
            <person name="Pasko D."/>
            <person name="Tonellato P.J."/>
            <person name="Twigger S."/>
            <person name="Ponting C.P."/>
            <person name="Duarte J.M."/>
            <person name="Rice S."/>
            <person name="Goodstadt L."/>
            <person name="Beatson S.A."/>
            <person name="Emes R.D."/>
            <person name="Winter E.E."/>
            <person name="Webber C."/>
            <person name="Brandt P."/>
            <person name="Nyakatura G."/>
            <person name="Adetobi M."/>
            <person name="Chiaromonte F."/>
            <person name="Elnitski L."/>
            <person name="Eswara P."/>
            <person name="Hardison R.C."/>
            <person name="Hou M."/>
            <person name="Kolbe D."/>
            <person name="Makova K."/>
            <person name="Miller W."/>
            <person name="Nekrutenko A."/>
            <person name="Riemer C."/>
            <person name="Schwartz S."/>
            <person name="Taylor J."/>
            <person name="Yang S."/>
            <person name="Zhang Y."/>
            <person name="Lindpaintner K."/>
            <person name="Andrews T.D."/>
            <person name="Caccamo M."/>
            <person name="Clamp M."/>
            <person name="Clarke L."/>
            <person name="Curwen V."/>
            <person name="Durbin R.M."/>
            <person name="Eyras E."/>
            <person name="Searle S.M."/>
            <person name="Cooper G.M."/>
            <person name="Batzoglou S."/>
            <person name="Brudno M."/>
            <person name="Sidow A."/>
            <person name="Stone E.A."/>
            <person name="Payseur B.A."/>
            <person name="Bourque G."/>
            <person name="Lopez-Otin C."/>
            <person name="Puente X.S."/>
            <person name="Chakrabarti K."/>
            <person name="Chatterji S."/>
            <person name="Dewey C."/>
            <person name="Pachter L."/>
            <person name="Bray N."/>
            <person name="Yap V.B."/>
            <person name="Caspi A."/>
            <person name="Tesler G."/>
            <person name="Pevzner P.A."/>
            <person name="Haussler D."/>
            <person name="Roskin K.M."/>
            <person name="Baertsch R."/>
            <person name="Clawson H."/>
            <person name="Furey T.S."/>
            <person name="Hinrichs A.S."/>
            <person name="Karolchik D."/>
            <person name="Kent W.J."/>
            <person name="Rosenbloom K.R."/>
            <person name="Trumbower H."/>
            <person name="Weirauch M."/>
            <person name="Cooper D.N."/>
            <person name="Stenson P.D."/>
            <person name="Ma B."/>
            <person name="Brent M."/>
            <person name="Arumugam M."/>
            <person name="Shteynberg D."/>
            <person name="Copley R.R."/>
            <person name="Taylor M.S."/>
            <person name="Riethman H."/>
            <person name="Mudunuri U."/>
            <person name="Peterson J."/>
            <person name="Guyer M."/>
            <person name="Felsenfeld A."/>
            <person name="Old S."/>
            <person name="Mockrin S."/>
            <person name="Collins F.S."/>
        </authorList>
    </citation>
    <scope>NUCLEOTIDE SEQUENCE [LARGE SCALE GENOMIC DNA]</scope>
    <source>
        <strain>Brown Norway</strain>
    </source>
</reference>
<reference key="2">
    <citation type="submission" date="2000-12" db="EMBL/GenBank/DDBJ databases">
        <title>Rattus norvegicus sphingosine-1-phosphate phosphohydrolase (Spp1) mRNA sequence.</title>
        <authorList>
            <person name="Yoshimura S."/>
            <person name="Salomone S."/>
            <person name="Waeber C."/>
        </authorList>
    </citation>
    <scope>NUCLEOTIDE SEQUENCE OF 125-304</scope>
    <source>
        <strain>Sprague-Dawley</strain>
    </source>
</reference>
<reference key="3">
    <citation type="journal article" date="2012" name="Nat. Commun.">
        <title>Quantitative maps of protein phosphorylation sites across 14 different rat organs and tissues.</title>
        <authorList>
            <person name="Lundby A."/>
            <person name="Secher A."/>
            <person name="Lage K."/>
            <person name="Nordsborg N.B."/>
            <person name="Dmytriyev A."/>
            <person name="Lundby C."/>
            <person name="Olsen J.V."/>
        </authorList>
    </citation>
    <scope>PHOSPHORYLATION [LARGE SCALE ANALYSIS] AT SER-101</scope>
    <scope>IDENTIFICATION BY MASS SPECTROMETRY [LARGE SCALE ANALYSIS]</scope>
</reference>
<feature type="chain" id="PRO_0000114479" description="Sphingosine-1-phosphate phosphatase 1">
    <location>
        <begin position="1"/>
        <end position="430"/>
    </location>
</feature>
<feature type="transmembrane region" description="Helical" evidence="4">
    <location>
        <begin position="121"/>
        <end position="141"/>
    </location>
</feature>
<feature type="transmembrane region" description="Helical" evidence="4">
    <location>
        <begin position="152"/>
        <end position="172"/>
    </location>
</feature>
<feature type="transmembrane region" description="Helical" evidence="4">
    <location>
        <begin position="193"/>
        <end position="213"/>
    </location>
</feature>
<feature type="transmembrane region" description="Helical" evidence="4">
    <location>
        <begin position="216"/>
        <end position="236"/>
    </location>
</feature>
<feature type="transmembrane region" description="Helical" evidence="4">
    <location>
        <begin position="246"/>
        <end position="266"/>
    </location>
</feature>
<feature type="transmembrane region" description="Helical" evidence="4">
    <location>
        <begin position="279"/>
        <end position="299"/>
    </location>
</feature>
<feature type="transmembrane region" description="Helical" evidence="4">
    <location>
        <begin position="311"/>
        <end position="331"/>
    </location>
</feature>
<feature type="transmembrane region" description="Helical" evidence="4">
    <location>
        <begin position="348"/>
        <end position="368"/>
    </location>
</feature>
<feature type="transmembrane region" description="Helical" evidence="4">
    <location>
        <begin position="409"/>
        <end position="429"/>
    </location>
</feature>
<feature type="region of interest" description="Disordered" evidence="5">
    <location>
        <begin position="34"/>
        <end position="100"/>
    </location>
</feature>
<feature type="region of interest" description="Phosphatase sequence motif I" evidence="6">
    <location>
        <begin position="167"/>
        <end position="175"/>
    </location>
</feature>
<feature type="region of interest" description="Phosphatase sequence motif II" evidence="6">
    <location>
        <begin position="194"/>
        <end position="197"/>
    </location>
</feature>
<feature type="region of interest" description="Phosphatase sequence motif III" evidence="6">
    <location>
        <begin position="237"/>
        <end position="248"/>
    </location>
</feature>
<feature type="active site" description="Proton donor" evidence="1">
    <location>
        <position position="197"/>
    </location>
</feature>
<feature type="active site" description="Nucleophile" evidence="1">
    <location>
        <position position="244"/>
    </location>
</feature>
<feature type="site" description="Stabilizes the active site histidine for nucleophilic attack" evidence="1">
    <location>
        <position position="248"/>
    </location>
</feature>
<feature type="modified residue" description="Phosphoserine" evidence="8">
    <location>
        <position position="101"/>
    </location>
</feature>
<feature type="modified residue" description="Phosphothreonine" evidence="2">
    <location>
        <position position="103"/>
    </location>
</feature>
<dbReference type="EC" id="3.1.3.-" evidence="2"/>
<dbReference type="EMBL" id="AABR03048654">
    <property type="status" value="NOT_ANNOTATED_CDS"/>
    <property type="molecule type" value="Genomic_DNA"/>
</dbReference>
<dbReference type="EMBL" id="AABR03050704">
    <property type="status" value="NOT_ANNOTATED_CDS"/>
    <property type="molecule type" value="Genomic_DNA"/>
</dbReference>
<dbReference type="EMBL" id="AF329638">
    <property type="protein sequence ID" value="AAK07473.1"/>
    <property type="molecule type" value="mRNA"/>
</dbReference>
<dbReference type="FunCoup" id="Q99P55">
    <property type="interactions" value="1495"/>
</dbReference>
<dbReference type="STRING" id="10116.ENSRNOP00000006913"/>
<dbReference type="GlyGen" id="Q99P55">
    <property type="glycosylation" value="1 site"/>
</dbReference>
<dbReference type="iPTMnet" id="Q99P55"/>
<dbReference type="PhosphoSitePlus" id="Q99P55"/>
<dbReference type="jPOST" id="Q99P55"/>
<dbReference type="PaxDb" id="10116-ENSRNOP00000006913"/>
<dbReference type="UCSC" id="RGD:727829">
    <property type="organism name" value="rat"/>
</dbReference>
<dbReference type="AGR" id="RGD:727829"/>
<dbReference type="RGD" id="727829">
    <property type="gene designation" value="Sgpp1"/>
</dbReference>
<dbReference type="eggNOG" id="KOG2822">
    <property type="taxonomic scope" value="Eukaryota"/>
</dbReference>
<dbReference type="InParanoid" id="Q99P55"/>
<dbReference type="PhylomeDB" id="Q99P55"/>
<dbReference type="Reactome" id="R-RNO-9845614">
    <property type="pathway name" value="Sphingolipid catabolism"/>
</dbReference>
<dbReference type="PRO" id="PR:Q99P55"/>
<dbReference type="Proteomes" id="UP000002494">
    <property type="component" value="Unplaced"/>
</dbReference>
<dbReference type="GO" id="GO:0005783">
    <property type="term" value="C:endoplasmic reticulum"/>
    <property type="evidence" value="ECO:0000266"/>
    <property type="project" value="RGD"/>
</dbReference>
<dbReference type="GO" id="GO:0005789">
    <property type="term" value="C:endoplasmic reticulum membrane"/>
    <property type="evidence" value="ECO:0000318"/>
    <property type="project" value="GO_Central"/>
</dbReference>
<dbReference type="GO" id="GO:0016020">
    <property type="term" value="C:membrane"/>
    <property type="evidence" value="ECO:0000266"/>
    <property type="project" value="RGD"/>
</dbReference>
<dbReference type="GO" id="GO:0005886">
    <property type="term" value="C:plasma membrane"/>
    <property type="evidence" value="ECO:0007669"/>
    <property type="project" value="UniProtKB-SubCell"/>
</dbReference>
<dbReference type="GO" id="GO:0070780">
    <property type="term" value="F:dihydrosphingosine-1-phosphate phosphatase activity"/>
    <property type="evidence" value="ECO:0007669"/>
    <property type="project" value="RHEA"/>
</dbReference>
<dbReference type="GO" id="GO:0042392">
    <property type="term" value="F:sphingosine-1-phosphate phosphatase activity"/>
    <property type="evidence" value="ECO:0000250"/>
    <property type="project" value="UniProtKB"/>
</dbReference>
<dbReference type="GO" id="GO:0035621">
    <property type="term" value="P:ER to Golgi ceramide transport"/>
    <property type="evidence" value="ECO:0000250"/>
    <property type="project" value="UniProtKB"/>
</dbReference>
<dbReference type="GO" id="GO:0097191">
    <property type="term" value="P:extrinsic apoptotic signaling pathway"/>
    <property type="evidence" value="ECO:0000266"/>
    <property type="project" value="RGD"/>
</dbReference>
<dbReference type="GO" id="GO:0097193">
    <property type="term" value="P:intrinsic apoptotic signaling pathway"/>
    <property type="evidence" value="ECO:0000266"/>
    <property type="project" value="RGD"/>
</dbReference>
<dbReference type="GO" id="GO:0046839">
    <property type="term" value="P:phospholipid dephosphorylation"/>
    <property type="evidence" value="ECO:0000318"/>
    <property type="project" value="GO_Central"/>
</dbReference>
<dbReference type="GO" id="GO:0045682">
    <property type="term" value="P:regulation of epidermis development"/>
    <property type="evidence" value="ECO:0000250"/>
    <property type="project" value="UniProtKB"/>
</dbReference>
<dbReference type="GO" id="GO:0045616">
    <property type="term" value="P:regulation of keratinocyte differentiation"/>
    <property type="evidence" value="ECO:0000250"/>
    <property type="project" value="UniProtKB"/>
</dbReference>
<dbReference type="GO" id="GO:0006668">
    <property type="term" value="P:sphinganine-1-phosphate metabolic process"/>
    <property type="evidence" value="ECO:0000266"/>
    <property type="project" value="RGD"/>
</dbReference>
<dbReference type="GO" id="GO:0006665">
    <property type="term" value="P:sphingolipid metabolic process"/>
    <property type="evidence" value="ECO:0000266"/>
    <property type="project" value="RGD"/>
</dbReference>
<dbReference type="GO" id="GO:0006670">
    <property type="term" value="P:sphingosine metabolic process"/>
    <property type="evidence" value="ECO:0000266"/>
    <property type="project" value="RGD"/>
</dbReference>
<dbReference type="CDD" id="cd03388">
    <property type="entry name" value="PAP2_SPPase1"/>
    <property type="match status" value="1"/>
</dbReference>
<dbReference type="FunFam" id="1.20.144.10:FF:000011">
    <property type="entry name" value="sphingosine-1-phosphate phosphatase 1"/>
    <property type="match status" value="1"/>
</dbReference>
<dbReference type="Gene3D" id="1.20.144.10">
    <property type="entry name" value="Phosphatidic acid phosphatase type 2/haloperoxidase"/>
    <property type="match status" value="1"/>
</dbReference>
<dbReference type="InterPro" id="IPR036938">
    <property type="entry name" value="P_Acid_Pase_2/haloperoxi_sf"/>
</dbReference>
<dbReference type="InterPro" id="IPR000326">
    <property type="entry name" value="P_Acid_Pase_2/haloperoxidase"/>
</dbReference>
<dbReference type="PANTHER" id="PTHR14969:SF45">
    <property type="entry name" value="SPHINGOSINE-1-PHOSPHATE PHOSPHATASE 1"/>
    <property type="match status" value="1"/>
</dbReference>
<dbReference type="PANTHER" id="PTHR14969">
    <property type="entry name" value="SPHINGOSINE-1-PHOSPHATE PHOSPHOHYDROLASE"/>
    <property type="match status" value="1"/>
</dbReference>
<dbReference type="Pfam" id="PF01569">
    <property type="entry name" value="PAP2"/>
    <property type="match status" value="1"/>
</dbReference>
<dbReference type="SMART" id="SM00014">
    <property type="entry name" value="acidPPc"/>
    <property type="match status" value="1"/>
</dbReference>
<dbReference type="SUPFAM" id="SSF48317">
    <property type="entry name" value="Acid phosphatase/Vanadium-dependent haloperoxidase"/>
    <property type="match status" value="1"/>
</dbReference>